<accession>Q7N6W7</accession>
<dbReference type="EMBL" id="BX571863">
    <property type="protein sequence ID" value="CAE13711.1"/>
    <property type="molecule type" value="Genomic_DNA"/>
</dbReference>
<dbReference type="RefSeq" id="WP_011145724.1">
    <property type="nucleotide sequence ID" value="NC_005126.1"/>
</dbReference>
<dbReference type="SMR" id="Q7N6W7"/>
<dbReference type="STRING" id="243265.plu1418"/>
<dbReference type="GeneID" id="48847705"/>
<dbReference type="KEGG" id="plu:plu1418"/>
<dbReference type="eggNOG" id="COG2156">
    <property type="taxonomic scope" value="Bacteria"/>
</dbReference>
<dbReference type="HOGENOM" id="CLU_077094_2_0_6"/>
<dbReference type="OrthoDB" id="9788285at2"/>
<dbReference type="Proteomes" id="UP000002514">
    <property type="component" value="Chromosome"/>
</dbReference>
<dbReference type="GO" id="GO:0005886">
    <property type="term" value="C:plasma membrane"/>
    <property type="evidence" value="ECO:0007669"/>
    <property type="project" value="UniProtKB-SubCell"/>
</dbReference>
<dbReference type="GO" id="GO:0005524">
    <property type="term" value="F:ATP binding"/>
    <property type="evidence" value="ECO:0007669"/>
    <property type="project" value="UniProtKB-UniRule"/>
</dbReference>
<dbReference type="GO" id="GO:0008556">
    <property type="term" value="F:P-type potassium transmembrane transporter activity"/>
    <property type="evidence" value="ECO:0007669"/>
    <property type="project" value="InterPro"/>
</dbReference>
<dbReference type="HAMAP" id="MF_00276">
    <property type="entry name" value="KdpC"/>
    <property type="match status" value="1"/>
</dbReference>
<dbReference type="InterPro" id="IPR003820">
    <property type="entry name" value="KdpC"/>
</dbReference>
<dbReference type="NCBIfam" id="TIGR00681">
    <property type="entry name" value="kdpC"/>
    <property type="match status" value="1"/>
</dbReference>
<dbReference type="NCBIfam" id="NF001454">
    <property type="entry name" value="PRK00315.1"/>
    <property type="match status" value="1"/>
</dbReference>
<dbReference type="PANTHER" id="PTHR30042">
    <property type="entry name" value="POTASSIUM-TRANSPORTING ATPASE C CHAIN"/>
    <property type="match status" value="1"/>
</dbReference>
<dbReference type="PANTHER" id="PTHR30042:SF2">
    <property type="entry name" value="POTASSIUM-TRANSPORTING ATPASE KDPC SUBUNIT"/>
    <property type="match status" value="1"/>
</dbReference>
<dbReference type="Pfam" id="PF02669">
    <property type="entry name" value="KdpC"/>
    <property type="match status" value="1"/>
</dbReference>
<dbReference type="PIRSF" id="PIRSF001296">
    <property type="entry name" value="K_ATPase_KdpC"/>
    <property type="match status" value="1"/>
</dbReference>
<protein>
    <recommendedName>
        <fullName evidence="1">Potassium-transporting ATPase KdpC subunit</fullName>
    </recommendedName>
    <alternativeName>
        <fullName evidence="1">ATP phosphohydrolase [potassium-transporting] C chain</fullName>
    </alternativeName>
    <alternativeName>
        <fullName evidence="1">Potassium-binding and translocating subunit C</fullName>
    </alternativeName>
    <alternativeName>
        <fullName evidence="1">Potassium-translocating ATPase C chain</fullName>
    </alternativeName>
</protein>
<gene>
    <name evidence="1" type="primary">kdpC</name>
    <name type="ordered locus">plu1418</name>
</gene>
<name>KDPC_PHOLL</name>
<organism>
    <name type="scientific">Photorhabdus laumondii subsp. laumondii (strain DSM 15139 / CIP 105565 / TT01)</name>
    <name type="common">Photorhabdus luminescens subsp. laumondii</name>
    <dbReference type="NCBI Taxonomy" id="243265"/>
    <lineage>
        <taxon>Bacteria</taxon>
        <taxon>Pseudomonadati</taxon>
        <taxon>Pseudomonadota</taxon>
        <taxon>Gammaproteobacteria</taxon>
        <taxon>Enterobacterales</taxon>
        <taxon>Morganellaceae</taxon>
        <taxon>Photorhabdus</taxon>
    </lineage>
</organism>
<keyword id="KW-0067">ATP-binding</keyword>
<keyword id="KW-0997">Cell inner membrane</keyword>
<keyword id="KW-1003">Cell membrane</keyword>
<keyword id="KW-0406">Ion transport</keyword>
<keyword id="KW-0472">Membrane</keyword>
<keyword id="KW-0547">Nucleotide-binding</keyword>
<keyword id="KW-0630">Potassium</keyword>
<keyword id="KW-0633">Potassium transport</keyword>
<keyword id="KW-1185">Reference proteome</keyword>
<keyword id="KW-0812">Transmembrane</keyword>
<keyword id="KW-1133">Transmembrane helix</keyword>
<keyword id="KW-0813">Transport</keyword>
<sequence>MIWLRSSVVLLIFLTLITGVAYPLLATGLSELMFPYQAQGSMVKQDGQTVGSELIGQPFTKAIYFQGRPSATVDYPYNTLSSGGSNLATTNPILDDEIKRRVEQLRQFNRQPDIPVPVDLVTASASGLDPHISPAAADFQAQRVADARHLPIKVIKQLIRDNIEHPPSEFLGEPVINVLKLNLALDNLPEKKQ</sequence>
<proteinExistence type="inferred from homology"/>
<evidence type="ECO:0000255" key="1">
    <source>
        <dbReference type="HAMAP-Rule" id="MF_00276"/>
    </source>
</evidence>
<feature type="chain" id="PRO_1000022300" description="Potassium-transporting ATPase KdpC subunit">
    <location>
        <begin position="1"/>
        <end position="193"/>
    </location>
</feature>
<feature type="transmembrane region" description="Helical" evidence="1">
    <location>
        <begin position="8"/>
        <end position="28"/>
    </location>
</feature>
<comment type="function">
    <text evidence="1">Part of the high-affinity ATP-driven potassium transport (or Kdp) system, which catalyzes the hydrolysis of ATP coupled with the electrogenic transport of potassium into the cytoplasm. This subunit acts as a catalytic chaperone that increases the ATP-binding affinity of the ATP-hydrolyzing subunit KdpB by the formation of a transient KdpB/KdpC/ATP ternary complex.</text>
</comment>
<comment type="subunit">
    <text evidence="1">The system is composed of three essential subunits: KdpA, KdpB and KdpC.</text>
</comment>
<comment type="subcellular location">
    <subcellularLocation>
        <location evidence="1">Cell inner membrane</location>
        <topology evidence="1">Single-pass membrane protein</topology>
    </subcellularLocation>
</comment>
<comment type="similarity">
    <text evidence="1">Belongs to the KdpC family.</text>
</comment>
<reference key="1">
    <citation type="journal article" date="2003" name="Nat. Biotechnol.">
        <title>The genome sequence of the entomopathogenic bacterium Photorhabdus luminescens.</title>
        <authorList>
            <person name="Duchaud E."/>
            <person name="Rusniok C."/>
            <person name="Frangeul L."/>
            <person name="Buchrieser C."/>
            <person name="Givaudan A."/>
            <person name="Taourit S."/>
            <person name="Bocs S."/>
            <person name="Boursaux-Eude C."/>
            <person name="Chandler M."/>
            <person name="Charles J.-F."/>
            <person name="Dassa E."/>
            <person name="Derose R."/>
            <person name="Derzelle S."/>
            <person name="Freyssinet G."/>
            <person name="Gaudriault S."/>
            <person name="Medigue C."/>
            <person name="Lanois A."/>
            <person name="Powell K."/>
            <person name="Siguier P."/>
            <person name="Vincent R."/>
            <person name="Wingate V."/>
            <person name="Zouine M."/>
            <person name="Glaser P."/>
            <person name="Boemare N."/>
            <person name="Danchin A."/>
            <person name="Kunst F."/>
        </authorList>
    </citation>
    <scope>NUCLEOTIDE SEQUENCE [LARGE SCALE GENOMIC DNA]</scope>
    <source>
        <strain>DSM 15139 / CIP 105565 / TT01</strain>
    </source>
</reference>